<dbReference type="EC" id="4.2.1.19" evidence="1"/>
<dbReference type="EMBL" id="CP001025">
    <property type="protein sequence ID" value="ACB62855.1"/>
    <property type="molecule type" value="Genomic_DNA"/>
</dbReference>
<dbReference type="RefSeq" id="WP_006751804.1">
    <property type="nucleotide sequence ID" value="NC_010551.1"/>
</dbReference>
<dbReference type="SMR" id="B1YRV7"/>
<dbReference type="GeneID" id="93084241"/>
<dbReference type="KEGG" id="bac:BamMC406_0354"/>
<dbReference type="HOGENOM" id="CLU_044308_2_0_4"/>
<dbReference type="OrthoDB" id="9790411at2"/>
<dbReference type="UniPathway" id="UPA00031">
    <property type="reaction ID" value="UER00011"/>
</dbReference>
<dbReference type="Proteomes" id="UP000001680">
    <property type="component" value="Chromosome 1"/>
</dbReference>
<dbReference type="GO" id="GO:0005737">
    <property type="term" value="C:cytoplasm"/>
    <property type="evidence" value="ECO:0007669"/>
    <property type="project" value="UniProtKB-SubCell"/>
</dbReference>
<dbReference type="GO" id="GO:0004424">
    <property type="term" value="F:imidazoleglycerol-phosphate dehydratase activity"/>
    <property type="evidence" value="ECO:0007669"/>
    <property type="project" value="UniProtKB-UniRule"/>
</dbReference>
<dbReference type="GO" id="GO:0000105">
    <property type="term" value="P:L-histidine biosynthetic process"/>
    <property type="evidence" value="ECO:0007669"/>
    <property type="project" value="UniProtKB-UniRule"/>
</dbReference>
<dbReference type="CDD" id="cd07914">
    <property type="entry name" value="IGPD"/>
    <property type="match status" value="1"/>
</dbReference>
<dbReference type="FunFam" id="3.30.230.40:FF:000002">
    <property type="entry name" value="Imidazoleglycerol-phosphate dehydratase"/>
    <property type="match status" value="1"/>
</dbReference>
<dbReference type="FunFam" id="3.30.230.40:FF:000003">
    <property type="entry name" value="Imidazoleglycerol-phosphate dehydratase HisB"/>
    <property type="match status" value="1"/>
</dbReference>
<dbReference type="Gene3D" id="3.30.230.40">
    <property type="entry name" value="Imidazole glycerol phosphate dehydratase, domain 1"/>
    <property type="match status" value="2"/>
</dbReference>
<dbReference type="HAMAP" id="MF_00076">
    <property type="entry name" value="HisB"/>
    <property type="match status" value="1"/>
</dbReference>
<dbReference type="InterPro" id="IPR038494">
    <property type="entry name" value="IGPD_sf"/>
</dbReference>
<dbReference type="InterPro" id="IPR000807">
    <property type="entry name" value="ImidazoleglycerolP_deHydtase"/>
</dbReference>
<dbReference type="InterPro" id="IPR020565">
    <property type="entry name" value="ImidazoleglycerP_deHydtase_CS"/>
</dbReference>
<dbReference type="InterPro" id="IPR020568">
    <property type="entry name" value="Ribosomal_Su5_D2-typ_SF"/>
</dbReference>
<dbReference type="NCBIfam" id="NF002106">
    <property type="entry name" value="PRK00951.1-1"/>
    <property type="match status" value="1"/>
</dbReference>
<dbReference type="NCBIfam" id="NF002109">
    <property type="entry name" value="PRK00951.1-5"/>
    <property type="match status" value="1"/>
</dbReference>
<dbReference type="NCBIfam" id="NF002111">
    <property type="entry name" value="PRK00951.2-1"/>
    <property type="match status" value="1"/>
</dbReference>
<dbReference type="NCBIfam" id="NF002114">
    <property type="entry name" value="PRK00951.2-4"/>
    <property type="match status" value="1"/>
</dbReference>
<dbReference type="PANTHER" id="PTHR23133:SF2">
    <property type="entry name" value="IMIDAZOLEGLYCEROL-PHOSPHATE DEHYDRATASE"/>
    <property type="match status" value="1"/>
</dbReference>
<dbReference type="PANTHER" id="PTHR23133">
    <property type="entry name" value="IMIDAZOLEGLYCEROL-PHOSPHATE DEHYDRATASE HIS7"/>
    <property type="match status" value="1"/>
</dbReference>
<dbReference type="Pfam" id="PF00475">
    <property type="entry name" value="IGPD"/>
    <property type="match status" value="1"/>
</dbReference>
<dbReference type="SUPFAM" id="SSF54211">
    <property type="entry name" value="Ribosomal protein S5 domain 2-like"/>
    <property type="match status" value="2"/>
</dbReference>
<dbReference type="PROSITE" id="PS00954">
    <property type="entry name" value="IGP_DEHYDRATASE_1"/>
    <property type="match status" value="1"/>
</dbReference>
<dbReference type="PROSITE" id="PS00955">
    <property type="entry name" value="IGP_DEHYDRATASE_2"/>
    <property type="match status" value="1"/>
</dbReference>
<protein>
    <recommendedName>
        <fullName evidence="1">Imidazoleglycerol-phosphate dehydratase</fullName>
        <shortName evidence="1">IGPD</shortName>
        <ecNumber evidence="1">4.2.1.19</ecNumber>
    </recommendedName>
</protein>
<evidence type="ECO:0000255" key="1">
    <source>
        <dbReference type="HAMAP-Rule" id="MF_00076"/>
    </source>
</evidence>
<name>HIS7_BURA4</name>
<accession>B1YRV7</accession>
<keyword id="KW-0028">Amino-acid biosynthesis</keyword>
<keyword id="KW-0963">Cytoplasm</keyword>
<keyword id="KW-0368">Histidine biosynthesis</keyword>
<keyword id="KW-0456">Lyase</keyword>
<comment type="catalytic activity">
    <reaction evidence="1">
        <text>D-erythro-1-(imidazol-4-yl)glycerol 3-phosphate = 3-(imidazol-4-yl)-2-oxopropyl phosphate + H2O</text>
        <dbReference type="Rhea" id="RHEA:11040"/>
        <dbReference type="ChEBI" id="CHEBI:15377"/>
        <dbReference type="ChEBI" id="CHEBI:57766"/>
        <dbReference type="ChEBI" id="CHEBI:58278"/>
        <dbReference type="EC" id="4.2.1.19"/>
    </reaction>
</comment>
<comment type="pathway">
    <text evidence="1">Amino-acid biosynthesis; L-histidine biosynthesis; L-histidine from 5-phospho-alpha-D-ribose 1-diphosphate: step 6/9.</text>
</comment>
<comment type="subcellular location">
    <subcellularLocation>
        <location evidence="1">Cytoplasm</location>
    </subcellularLocation>
</comment>
<comment type="similarity">
    <text evidence="1">Belongs to the imidazoleglycerol-phosphate dehydratase family.</text>
</comment>
<proteinExistence type="inferred from homology"/>
<reference key="1">
    <citation type="submission" date="2008-04" db="EMBL/GenBank/DDBJ databases">
        <title>Complete sequence of chromosome 1 of Burkholderia ambifaria MC40-6.</title>
        <authorList>
            <person name="Copeland A."/>
            <person name="Lucas S."/>
            <person name="Lapidus A."/>
            <person name="Glavina del Rio T."/>
            <person name="Dalin E."/>
            <person name="Tice H."/>
            <person name="Pitluck S."/>
            <person name="Chain P."/>
            <person name="Malfatti S."/>
            <person name="Shin M."/>
            <person name="Vergez L."/>
            <person name="Lang D."/>
            <person name="Schmutz J."/>
            <person name="Larimer F."/>
            <person name="Land M."/>
            <person name="Hauser L."/>
            <person name="Kyrpides N."/>
            <person name="Lykidis A."/>
            <person name="Ramette A."/>
            <person name="Konstantinidis K."/>
            <person name="Tiedje J."/>
            <person name="Richardson P."/>
        </authorList>
    </citation>
    <scope>NUCLEOTIDE SEQUENCE [LARGE SCALE GENOMIC DNA]</scope>
    <source>
        <strain>MC40-6</strain>
    </source>
</reference>
<gene>
    <name evidence="1" type="primary">hisB</name>
    <name type="ordered locus">BamMC406_0354</name>
</gene>
<organism>
    <name type="scientific">Burkholderia ambifaria (strain MC40-6)</name>
    <dbReference type="NCBI Taxonomy" id="398577"/>
    <lineage>
        <taxon>Bacteria</taxon>
        <taxon>Pseudomonadati</taxon>
        <taxon>Pseudomonadota</taxon>
        <taxon>Betaproteobacteria</taxon>
        <taxon>Burkholderiales</taxon>
        <taxon>Burkholderiaceae</taxon>
        <taxon>Burkholderia</taxon>
        <taxon>Burkholderia cepacia complex</taxon>
    </lineage>
</organism>
<feature type="chain" id="PRO_1000092675" description="Imidazoleglycerol-phosphate dehydratase">
    <location>
        <begin position="1"/>
        <end position="195"/>
    </location>
</feature>
<sequence length="195" mass="21500">MRVAEVVRNTSETQIRVKLDLDGTGRQKLATGVPFLDHMLDQIARHGLIDLEVEAHGDTHIDDHHTVEDVGITLGQAVAKAIGDKKGIRRYGHSYVPLDEALSRVVIDFSGRPGLEFHVPFTRARIGTFDVDLSIEFFRGFVNHAGVTLHIDNLRGINAHHQLETVFKAFGRALRAAVELDERAAGQIPSTKGSL</sequence>